<dbReference type="EMBL" id="ACFL01000072">
    <property type="protein sequence ID" value="EEU07715.1"/>
    <property type="molecule type" value="Genomic_DNA"/>
</dbReference>
<dbReference type="SMR" id="C7GNA4"/>
<dbReference type="OrthoDB" id="24143at4893"/>
<dbReference type="Proteomes" id="UP000008073">
    <property type="component" value="Unassembled WGS sequence"/>
</dbReference>
<dbReference type="GO" id="GO:0005935">
    <property type="term" value="C:cellular bud neck"/>
    <property type="evidence" value="ECO:0007669"/>
    <property type="project" value="UniProtKB-SubCell"/>
</dbReference>
<dbReference type="GO" id="GO:0005934">
    <property type="term" value="C:cellular bud tip"/>
    <property type="evidence" value="ECO:0007669"/>
    <property type="project" value="UniProtKB-SubCell"/>
</dbReference>
<dbReference type="GO" id="GO:0005737">
    <property type="term" value="C:cytoplasm"/>
    <property type="evidence" value="ECO:0007669"/>
    <property type="project" value="UniProtKB-SubCell"/>
</dbReference>
<dbReference type="GO" id="GO:0005886">
    <property type="term" value="C:plasma membrane"/>
    <property type="evidence" value="ECO:0007669"/>
    <property type="project" value="UniProtKB-SubCell"/>
</dbReference>
<dbReference type="GO" id="GO:0005085">
    <property type="term" value="F:guanyl-nucleotide exchange factor activity"/>
    <property type="evidence" value="ECO:0007669"/>
    <property type="project" value="UniProtKB-KW"/>
</dbReference>
<dbReference type="GO" id="GO:0032012">
    <property type="term" value="P:regulation of ARF protein signal transduction"/>
    <property type="evidence" value="ECO:0007669"/>
    <property type="project" value="InterPro"/>
</dbReference>
<dbReference type="Gene3D" id="1.10.1000.11">
    <property type="entry name" value="Arf Nucleotide-binding Site Opener,domain 2"/>
    <property type="match status" value="1"/>
</dbReference>
<dbReference type="InterPro" id="IPR056468">
    <property type="entry name" value="PH_GEF_YEL1"/>
</dbReference>
<dbReference type="InterPro" id="IPR023394">
    <property type="entry name" value="Sec7_C_sf"/>
</dbReference>
<dbReference type="InterPro" id="IPR000904">
    <property type="entry name" value="Sec7_dom"/>
</dbReference>
<dbReference type="InterPro" id="IPR035999">
    <property type="entry name" value="Sec7_dom_sf"/>
</dbReference>
<dbReference type="PANTHER" id="PTHR10663">
    <property type="entry name" value="GUANYL-NUCLEOTIDE EXCHANGE FACTOR"/>
    <property type="match status" value="1"/>
</dbReference>
<dbReference type="Pfam" id="PF23633">
    <property type="entry name" value="PH_GEF_YEL1"/>
    <property type="match status" value="1"/>
</dbReference>
<dbReference type="Pfam" id="PF01369">
    <property type="entry name" value="Sec7"/>
    <property type="match status" value="1"/>
</dbReference>
<dbReference type="SMART" id="SM00222">
    <property type="entry name" value="Sec7"/>
    <property type="match status" value="1"/>
</dbReference>
<dbReference type="SUPFAM" id="SSF48425">
    <property type="entry name" value="Sec7 domain"/>
    <property type="match status" value="1"/>
</dbReference>
<dbReference type="PROSITE" id="PS50190">
    <property type="entry name" value="SEC7"/>
    <property type="match status" value="1"/>
</dbReference>
<gene>
    <name type="primary">YEL1</name>
    <name type="ORF">C1Q_01771</name>
</gene>
<sequence>MCASLNEVKKNETYGVSQKGYNDNFSESEGVLHGSKSMPTSMKNMLQSPTMVNMCDILQNKEAANDEKPVIPTTDTATAGTGTEDISSTQSEETDQNSHLIASEILEGTFKDISYKEYANFLGNDNNNQVLTEFVKLLSPLPSSLLETLFNLSKSIYFIAEAQNIDRILECLSKEWIACHPNTHWKSGYKSCHIVLFSLLILNSDLHNNFQVDHKKIKFSMVAFINNTLRALREENEYEELKIYSREHLIIEELSEYYKTLNETPLPLCTESRTSINTSDNQSSLKRFSTLGSREFSTSNLRSVNSNSTTLYSRDGQVSVREMSAKSNKNFHNNHPMDALYLKESFDDGLITENGSSWFMDDLILISKKSLPRKYSKRDKDQVAAPKMTSKRNKSFFGWLKPSKTTTLIEHTSRRTSLSYLNKDSEWERVKIQVKEGRIFIFKIKPDVKDIIQSSETDSATIDYFKDISSSYFAYSLLEAEAHVVQDNIIIGSGAMKSNVCNKNTKRKSGNFTVSFPENINGPKLVLEFQTRSVEEAHKFMDCINFWAGRISPVPLTQFEAVSNAEYGWSDKILTEHASLNLKNIVVSEWKPLLGLELLYEDAKDVEMVELKERLKELMNFTRQLGIWIDKHNEIKDKLVEIWSFDDNYFEAVMNNWNSRYLYMNNQYKKRLSYLKALQKAMGSVQF</sequence>
<feature type="chain" id="PRO_0000404227" description="Guanine-nucleotide exchange factor YEL1">
    <location>
        <begin position="1"/>
        <end position="687"/>
    </location>
</feature>
<feature type="domain" description="SEC7" evidence="3">
    <location>
        <begin position="57"/>
        <end position="264"/>
    </location>
</feature>
<feature type="domain" description="PH">
    <location>
        <begin position="412"/>
        <end position="551"/>
    </location>
</feature>
<feature type="region of interest" description="Disordered" evidence="4">
    <location>
        <begin position="63"/>
        <end position="97"/>
    </location>
</feature>
<feature type="compositionally biased region" description="Low complexity" evidence="4">
    <location>
        <begin position="73"/>
        <end position="83"/>
    </location>
</feature>
<feature type="modified residue" description="Phosphothreonine" evidence="2">
    <location>
        <position position="290"/>
    </location>
</feature>
<feature type="modified residue" description="Phosphoserine" evidence="2">
    <location>
        <position position="293"/>
    </location>
</feature>
<feature type="modified residue" description="Phosphoserine" evidence="2">
    <location>
        <position position="299"/>
    </location>
</feature>
<protein>
    <recommendedName>
        <fullName>Guanine-nucleotide exchange factor YEL1</fullName>
    </recommendedName>
    <alternativeName>
        <fullName>EFA6-like protein 1</fullName>
    </alternativeName>
</protein>
<organism>
    <name type="scientific">Saccharomyces cerevisiae (strain JAY291)</name>
    <name type="common">Baker's yeast</name>
    <dbReference type="NCBI Taxonomy" id="574961"/>
    <lineage>
        <taxon>Eukaryota</taxon>
        <taxon>Fungi</taxon>
        <taxon>Dikarya</taxon>
        <taxon>Ascomycota</taxon>
        <taxon>Saccharomycotina</taxon>
        <taxon>Saccharomycetes</taxon>
        <taxon>Saccharomycetales</taxon>
        <taxon>Saccharomycetaceae</taxon>
        <taxon>Saccharomyces</taxon>
    </lineage>
</organism>
<evidence type="ECO:0000250" key="1"/>
<evidence type="ECO:0000250" key="2">
    <source>
        <dbReference type="UniProtKB" id="P34225"/>
    </source>
</evidence>
<evidence type="ECO:0000255" key="3">
    <source>
        <dbReference type="PROSITE-ProRule" id="PRU00189"/>
    </source>
</evidence>
<evidence type="ECO:0000256" key="4">
    <source>
        <dbReference type="SAM" id="MobiDB-lite"/>
    </source>
</evidence>
<evidence type="ECO:0000305" key="5"/>
<keyword id="KW-1003">Cell membrane</keyword>
<keyword id="KW-0963">Cytoplasm</keyword>
<keyword id="KW-0344">Guanine-nucleotide releasing factor</keyword>
<keyword id="KW-0472">Membrane</keyword>
<keyword id="KW-0597">Phosphoprotein</keyword>
<name>YEL1_YEAS2</name>
<accession>C7GNA4</accession>
<proteinExistence type="inferred from homology"/>
<reference key="1">
    <citation type="journal article" date="2009" name="Genome Res.">
        <title>Genome structure of a Saccharomyces cerevisiae strain widely used in bioethanol production.</title>
        <authorList>
            <person name="Argueso J.L."/>
            <person name="Carazzolle M.F."/>
            <person name="Mieczkowski P.A."/>
            <person name="Duarte F.M."/>
            <person name="Netto O.V.C."/>
            <person name="Missawa S.K."/>
            <person name="Galzerani F."/>
            <person name="Costa G.G.L."/>
            <person name="Vidal R.O."/>
            <person name="Noronha M.F."/>
            <person name="Dominska M."/>
            <person name="Andrietta M.G.S."/>
            <person name="Andrietta S.R."/>
            <person name="Cunha A.F."/>
            <person name="Gomes L.H."/>
            <person name="Tavares F.C.A."/>
            <person name="Alcarde A.R."/>
            <person name="Dietrich F.S."/>
            <person name="McCusker J.H."/>
            <person name="Petes T.D."/>
            <person name="Pereira G.A.G."/>
        </authorList>
    </citation>
    <scope>NUCLEOTIDE SEQUENCE [LARGE SCALE GENOMIC DNA]</scope>
    <source>
        <strain>JAY291</strain>
    </source>
</reference>
<comment type="function">
    <text evidence="1">Guanine nucleotide exchange factor for ARF3 required for localization of ARF3 to the bud neck and tip and involved in actin patch polarization.</text>
</comment>
<comment type="subcellular location">
    <subcellularLocation>
        <location evidence="1">Cytoplasm</location>
    </subcellularLocation>
    <subcellularLocation>
        <location evidence="1">Cell membrane</location>
        <topology evidence="1">Peripheral membrane protein</topology>
    </subcellularLocation>
    <subcellularLocation>
        <location evidence="1">Bud neck</location>
    </subcellularLocation>
    <subcellularLocation>
        <location evidence="1">Bud tip</location>
    </subcellularLocation>
    <text evidence="1">Localizes at the cell membrane only at the bud neck and bud tip and this localization is ARF3-dependent.</text>
</comment>
<comment type="similarity">
    <text evidence="5">Belongs to the YEL1 family.</text>
</comment>